<proteinExistence type="inferred from homology"/>
<name>O163_CONTC</name>
<protein>
    <recommendedName>
        <fullName evidence="4">Conotoxin Tr6.3</fullName>
    </recommendedName>
</protein>
<comment type="function">
    <text evidence="2">Ion channel inhibitor that inhibits the increase in intracellular calcium upon depolarization in DRG neurons. In vivo, both intraperitoneal and intracranial injections into mice induce hyperactivity.</text>
</comment>
<comment type="subcellular location">
    <subcellularLocation>
        <location evidence="6">Secreted</location>
    </subcellularLocation>
</comment>
<comment type="tissue specificity">
    <text evidence="6">Expressed by the venom duct.</text>
</comment>
<comment type="domain">
    <text evidence="5">The presence of a 'disulfide through disulfide knot' structurally defines this protein as a knottin.</text>
</comment>
<comment type="domain">
    <text evidence="5">The cysteine framework is VI/VII (C-C-CC-C-C).</text>
</comment>
<comment type="similarity">
    <text evidence="5">Belongs to the conotoxin O1 superfamily.</text>
</comment>
<comment type="caution">
    <text evidence="6">There is a sequence conflict at position 66 between sequences shown in fig.3 (Gly) and fig.4 (Glu).</text>
</comment>
<evidence type="ECO:0000250" key="1">
    <source>
        <dbReference type="UniProtKB" id="P60179"/>
    </source>
</evidence>
<evidence type="ECO:0000250" key="2">
    <source>
        <dbReference type="UniProtKB" id="Q5K0C7"/>
    </source>
</evidence>
<evidence type="ECO:0000255" key="3"/>
<evidence type="ECO:0000303" key="4">
    <source>
    </source>
</evidence>
<evidence type="ECO:0000305" key="5"/>
<evidence type="ECO:0000305" key="6">
    <source>
    </source>
</evidence>
<feature type="signal peptide" evidence="3">
    <location>
        <begin position="1"/>
        <end position="22"/>
    </location>
</feature>
<feature type="propeptide" id="PRO_0000456332" evidence="2">
    <location>
        <begin position="23"/>
        <end position="47"/>
    </location>
</feature>
<feature type="peptide" id="PRO_0000456333" description="Conotoxin Tr6.3" evidence="2">
    <location>
        <begin position="48"/>
        <end position="79"/>
    </location>
</feature>
<feature type="modified residue" description="4-hydroxyproline" evidence="2">
    <location>
        <position position="60"/>
    </location>
</feature>
<feature type="modified residue" description="4-hydroxyproline" evidence="2">
    <location>
        <position position="63"/>
    </location>
</feature>
<feature type="disulfide bond" evidence="1">
    <location>
        <begin position="49"/>
        <end position="62"/>
    </location>
</feature>
<feature type="disulfide bond" evidence="1">
    <location>
        <begin position="56"/>
        <end position="67"/>
    </location>
</feature>
<feature type="disulfide bond" evidence="1">
    <location>
        <begin position="61"/>
        <end position="77"/>
    </location>
</feature>
<feature type="sequence conflict" description="In Ref. 1." evidence="5" ref="1">
    <original>G</original>
    <variation>E</variation>
    <location>
        <position position="66"/>
    </location>
</feature>
<accession>P0DW78</accession>
<reference key="1">
    <citation type="journal article" date="2016" name="Toxicon">
        <title>Glycine-rich conotoxins from the Virgiconus clade.</title>
        <authorList>
            <person name="Espino S.S."/>
            <person name="Dilanyan T."/>
            <person name="Imperial J.S."/>
            <person name="Aguilar M.B."/>
            <person name="Teichert R.W."/>
            <person name="Bandyopadhyay P."/>
            <person name="Olivera B.M."/>
        </authorList>
    </citation>
    <scope>NUCLEOTIDE SEQUENCE [MRNA]</scope>
    <source>
        <tissue>Venom duct</tissue>
    </source>
</reference>
<dbReference type="SMR" id="P0DW78"/>
<dbReference type="GO" id="GO:0005576">
    <property type="term" value="C:extracellular region"/>
    <property type="evidence" value="ECO:0007669"/>
    <property type="project" value="UniProtKB-SubCell"/>
</dbReference>
<dbReference type="GO" id="GO:0008200">
    <property type="term" value="F:ion channel inhibitor activity"/>
    <property type="evidence" value="ECO:0007669"/>
    <property type="project" value="InterPro"/>
</dbReference>
<dbReference type="GO" id="GO:0090729">
    <property type="term" value="F:toxin activity"/>
    <property type="evidence" value="ECO:0007669"/>
    <property type="project" value="UniProtKB-KW"/>
</dbReference>
<dbReference type="InterPro" id="IPR004214">
    <property type="entry name" value="Conotoxin"/>
</dbReference>
<dbReference type="Pfam" id="PF02950">
    <property type="entry name" value="Conotoxin"/>
    <property type="match status" value="1"/>
</dbReference>
<organism>
    <name type="scientific">Conus terebra</name>
    <name type="common">Sea snail</name>
    <name type="synonym">Virgiconus terebra</name>
    <dbReference type="NCBI Taxonomy" id="89453"/>
    <lineage>
        <taxon>Eukaryota</taxon>
        <taxon>Metazoa</taxon>
        <taxon>Spiralia</taxon>
        <taxon>Lophotrochozoa</taxon>
        <taxon>Mollusca</taxon>
        <taxon>Gastropoda</taxon>
        <taxon>Caenogastropoda</taxon>
        <taxon>Neogastropoda</taxon>
        <taxon>Conoidea</taxon>
        <taxon>Conidae</taxon>
        <taxon>Conus</taxon>
        <taxon>Virgiconus</taxon>
    </lineage>
</organism>
<keyword id="KW-1015">Disulfide bond</keyword>
<keyword id="KW-0379">Hydroxylation</keyword>
<keyword id="KW-0872">Ion channel impairing toxin</keyword>
<keyword id="KW-0960">Knottin</keyword>
<keyword id="KW-0964">Secreted</keyword>
<keyword id="KW-0732">Signal</keyword>
<keyword id="KW-0800">Toxin</keyword>
<sequence>MKLTCVLIISVLFLTASQLITAVYSRDKQQYRAARLRDEMRNLKGARDCGEQGQGCYTRPCCPGLGCRAGATGGGVCQQ</sequence>